<name>TOTX_DROPE</name>
<comment type="function">
    <text evidence="1">A humoral factor that may play a role in stress tolerance.</text>
</comment>
<comment type="subcellular location">
    <subcellularLocation>
        <location evidence="1">Secreted</location>
    </subcellularLocation>
</comment>
<comment type="similarity">
    <text evidence="2">Belongs to the Turandot family.</text>
</comment>
<comment type="sequence caution" evidence="3">
    <conflict type="erroneous initiation">
        <sequence resource="EMBL-CDS" id="EDW24698"/>
    </conflict>
</comment>
<organism>
    <name type="scientific">Drosophila persimilis</name>
    <name type="common">Fruit fly</name>
    <dbReference type="NCBI Taxonomy" id="7234"/>
    <lineage>
        <taxon>Eukaryota</taxon>
        <taxon>Metazoa</taxon>
        <taxon>Ecdysozoa</taxon>
        <taxon>Arthropoda</taxon>
        <taxon>Hexapoda</taxon>
        <taxon>Insecta</taxon>
        <taxon>Pterygota</taxon>
        <taxon>Neoptera</taxon>
        <taxon>Endopterygota</taxon>
        <taxon>Diptera</taxon>
        <taxon>Brachycera</taxon>
        <taxon>Muscomorpha</taxon>
        <taxon>Ephydroidea</taxon>
        <taxon>Drosophilidae</taxon>
        <taxon>Drosophila</taxon>
        <taxon>Sophophora</taxon>
    </lineage>
</organism>
<keyword id="KW-0391">Immunity</keyword>
<keyword id="KW-0399">Innate immunity</keyword>
<keyword id="KW-1185">Reference proteome</keyword>
<keyword id="KW-0964">Secreted</keyword>
<keyword id="KW-0732">Signal</keyword>
<reference evidence="4" key="1">
    <citation type="journal article" date="2007" name="Nature">
        <title>Evolution of genes and genomes on the Drosophila phylogeny.</title>
        <authorList>
            <consortium name="Drosophila 12 genomes consortium"/>
        </authorList>
    </citation>
    <scope>NUCLEOTIDE SEQUENCE [LARGE SCALE GENOMIC DNA]</scope>
    <source>
        <strain>MSH-3 / Tucson 14011-0111.49</strain>
    </source>
</reference>
<gene>
    <name evidence="1" type="primary">TotX</name>
    <name type="ORF">GL24287</name>
</gene>
<accession>B4G532</accession>
<protein>
    <recommendedName>
        <fullName>Protein Turandot X</fullName>
    </recommendedName>
</protein>
<proteinExistence type="inferred from homology"/>
<feature type="signal peptide" evidence="2">
    <location>
        <begin position="1"/>
        <end position="24"/>
    </location>
</feature>
<feature type="chain" id="PRO_0000355001" description="Protein Turandot X">
    <location>
        <begin position="25"/>
        <end position="137"/>
    </location>
</feature>
<sequence>MKVPVFQLSCLLCLIVCLLCSVKAQKDDQYDTEKSRILEIYNNPAVDEFTKERNIPKLIEFYRRYPARIQLPDADKRQWDEFVARYTESQTKLVDGLPAQGGWVGSVLSSTVGNLIAKFIFSLIRYDPTTPKPTGAH</sequence>
<evidence type="ECO:0000250" key="1">
    <source>
        <dbReference type="UniProtKB" id="Q8IN41"/>
    </source>
</evidence>
<evidence type="ECO:0000255" key="2"/>
<evidence type="ECO:0000305" key="3"/>
<evidence type="ECO:0000312" key="4">
    <source>
        <dbReference type="EMBL" id="EDW24698.1"/>
    </source>
</evidence>
<dbReference type="EMBL" id="CH479179">
    <property type="protein sequence ID" value="EDW24698.1"/>
    <property type="status" value="ALT_INIT"/>
    <property type="molecule type" value="Genomic_DNA"/>
</dbReference>
<dbReference type="RefSeq" id="XP_002013712.1">
    <property type="nucleotide sequence ID" value="XM_002013676.1"/>
</dbReference>
<dbReference type="SMR" id="B4G532"/>
<dbReference type="EnsemblMetazoa" id="FBtr0189902">
    <property type="protein sequence ID" value="FBpp0188394"/>
    <property type="gene ID" value="FBgn0161877"/>
</dbReference>
<dbReference type="EnsemblMetazoa" id="XM_026994866.1">
    <property type="protein sequence ID" value="XP_026850667.1"/>
    <property type="gene ID" value="LOC6587878"/>
</dbReference>
<dbReference type="OrthoDB" id="7850164at2759"/>
<dbReference type="Proteomes" id="UP000008744">
    <property type="component" value="Unassembled WGS sequence"/>
</dbReference>
<dbReference type="GO" id="GO:0005615">
    <property type="term" value="C:extracellular space"/>
    <property type="evidence" value="ECO:0000250"/>
    <property type="project" value="UniProtKB"/>
</dbReference>
<dbReference type="GO" id="GO:0034605">
    <property type="term" value="P:cellular response to heat"/>
    <property type="evidence" value="ECO:0007669"/>
    <property type="project" value="UniProtKB-ARBA"/>
</dbReference>
<dbReference type="GO" id="GO:0045087">
    <property type="term" value="P:innate immune response"/>
    <property type="evidence" value="ECO:0007669"/>
    <property type="project" value="UniProtKB-KW"/>
</dbReference>
<dbReference type="GO" id="GO:0009617">
    <property type="term" value="P:response to bacterium"/>
    <property type="evidence" value="ECO:0000250"/>
    <property type="project" value="UniProtKB"/>
</dbReference>
<dbReference type="GO" id="GO:0009408">
    <property type="term" value="P:response to heat"/>
    <property type="evidence" value="ECO:0000250"/>
    <property type="project" value="UniProtKB"/>
</dbReference>
<dbReference type="GO" id="GO:0006979">
    <property type="term" value="P:response to oxidative stress"/>
    <property type="evidence" value="ECO:0000250"/>
    <property type="project" value="UniProtKB"/>
</dbReference>
<dbReference type="InterPro" id="IPR010825">
    <property type="entry name" value="Turandot"/>
</dbReference>
<dbReference type="Pfam" id="PF07240">
    <property type="entry name" value="Turandot"/>
    <property type="match status" value="1"/>
</dbReference>